<gene>
    <name evidence="1" type="primary">argE</name>
    <name type="ordered locus">ECS88_4412</name>
</gene>
<sequence length="383" mass="42266">MKNKLPPFIEIYRALIATPSISATEEALDQSNADLITLLADWFKDLGFNVEVQPVPGTRNKFNMLASCGQGAGGLLLAGHTDTVPFDDGRWTRDPFTLTEHDGKLYGLGTADMKGFFAFILDALRDVDVTKLAKPLYILATADEETSMAGARYFAETTALRPDCAIIGEPTSLQPVRAHKGHISNAIRIQGQSGHSSDPARGVNAIELMHDAIGHILQLRDNLKERYHYDAFTVPYPTLNLGHIHGGDASNRICACCELHMDIRPLPGMTLNELNGLLNDALAPVSERWPGRLTVDELHPPIPGYECPPNHQLVEVVEKLLGAKTEVVNYCTEAPFIQTLCPTLVLGPGSINQAHQPDEYLETRFIKPTRELITQVIHHFCWH</sequence>
<comment type="function">
    <text evidence="1">Catalyzes the hydrolysis of the amide bond of N(2)-acetylated L-amino acids. Cleaves the acetyl group from N-acetyl-L-ornithine to form L-ornithine, an intermediate in L-arginine biosynthesis pathway, and a branchpoint in the synthesis of polyamines.</text>
</comment>
<comment type="catalytic activity">
    <reaction evidence="1">
        <text>N(2)-acetyl-L-ornithine + H2O = L-ornithine + acetate</text>
        <dbReference type="Rhea" id="RHEA:15941"/>
        <dbReference type="ChEBI" id="CHEBI:15377"/>
        <dbReference type="ChEBI" id="CHEBI:30089"/>
        <dbReference type="ChEBI" id="CHEBI:46911"/>
        <dbReference type="ChEBI" id="CHEBI:57805"/>
        <dbReference type="EC" id="3.5.1.16"/>
    </reaction>
</comment>
<comment type="cofactor">
    <cofactor evidence="1">
        <name>Zn(2+)</name>
        <dbReference type="ChEBI" id="CHEBI:29105"/>
    </cofactor>
    <cofactor evidence="1">
        <name>Co(2+)</name>
        <dbReference type="ChEBI" id="CHEBI:48828"/>
    </cofactor>
    <text evidence="1">Binds 2 Zn(2+) or Co(2+) ions per subunit.</text>
</comment>
<comment type="cofactor">
    <cofactor evidence="1">
        <name>glutathione</name>
        <dbReference type="ChEBI" id="CHEBI:57925"/>
    </cofactor>
</comment>
<comment type="pathway">
    <text evidence="1">Amino-acid biosynthesis; L-arginine biosynthesis; L-ornithine from N(2)-acetyl-L-ornithine (linear): step 1/1.</text>
</comment>
<comment type="subunit">
    <text evidence="1">Homodimer.</text>
</comment>
<comment type="subcellular location">
    <subcellularLocation>
        <location evidence="1">Cytoplasm</location>
    </subcellularLocation>
</comment>
<comment type="similarity">
    <text evidence="1">Belongs to the peptidase M20A family. ArgE subfamily.</text>
</comment>
<reference key="1">
    <citation type="journal article" date="2009" name="PLoS Genet.">
        <title>Organised genome dynamics in the Escherichia coli species results in highly diverse adaptive paths.</title>
        <authorList>
            <person name="Touchon M."/>
            <person name="Hoede C."/>
            <person name="Tenaillon O."/>
            <person name="Barbe V."/>
            <person name="Baeriswyl S."/>
            <person name="Bidet P."/>
            <person name="Bingen E."/>
            <person name="Bonacorsi S."/>
            <person name="Bouchier C."/>
            <person name="Bouvet O."/>
            <person name="Calteau A."/>
            <person name="Chiapello H."/>
            <person name="Clermont O."/>
            <person name="Cruveiller S."/>
            <person name="Danchin A."/>
            <person name="Diard M."/>
            <person name="Dossat C."/>
            <person name="Karoui M.E."/>
            <person name="Frapy E."/>
            <person name="Garry L."/>
            <person name="Ghigo J.M."/>
            <person name="Gilles A.M."/>
            <person name="Johnson J."/>
            <person name="Le Bouguenec C."/>
            <person name="Lescat M."/>
            <person name="Mangenot S."/>
            <person name="Martinez-Jehanne V."/>
            <person name="Matic I."/>
            <person name="Nassif X."/>
            <person name="Oztas S."/>
            <person name="Petit M.A."/>
            <person name="Pichon C."/>
            <person name="Rouy Z."/>
            <person name="Ruf C.S."/>
            <person name="Schneider D."/>
            <person name="Tourret J."/>
            <person name="Vacherie B."/>
            <person name="Vallenet D."/>
            <person name="Medigue C."/>
            <person name="Rocha E.P.C."/>
            <person name="Denamur E."/>
        </authorList>
    </citation>
    <scope>NUCLEOTIDE SEQUENCE [LARGE SCALE GENOMIC DNA]</scope>
    <source>
        <strain>S88 / ExPEC</strain>
    </source>
</reference>
<keyword id="KW-0028">Amino-acid biosynthesis</keyword>
<keyword id="KW-0055">Arginine biosynthesis</keyword>
<keyword id="KW-0170">Cobalt</keyword>
<keyword id="KW-0963">Cytoplasm</keyword>
<keyword id="KW-0378">Hydrolase</keyword>
<keyword id="KW-0479">Metal-binding</keyword>
<keyword id="KW-1185">Reference proteome</keyword>
<keyword id="KW-0862">Zinc</keyword>
<feature type="chain" id="PRO_1000137061" description="Acetylornithine deacetylase">
    <location>
        <begin position="1"/>
        <end position="383"/>
    </location>
</feature>
<feature type="active site" evidence="1">
    <location>
        <position position="82"/>
    </location>
</feature>
<feature type="active site" evidence="1">
    <location>
        <position position="144"/>
    </location>
</feature>
<feature type="binding site" evidence="1">
    <location>
        <position position="80"/>
    </location>
    <ligand>
        <name>Zn(2+)</name>
        <dbReference type="ChEBI" id="CHEBI:29105"/>
        <label>1</label>
    </ligand>
</feature>
<feature type="binding site" evidence="1">
    <location>
        <position position="112"/>
    </location>
    <ligand>
        <name>Zn(2+)</name>
        <dbReference type="ChEBI" id="CHEBI:29105"/>
        <label>1</label>
    </ligand>
</feature>
<feature type="binding site" evidence="1">
    <location>
        <position position="112"/>
    </location>
    <ligand>
        <name>Zn(2+)</name>
        <dbReference type="ChEBI" id="CHEBI:29105"/>
        <label>2</label>
    </ligand>
</feature>
<feature type="binding site" evidence="1">
    <location>
        <position position="145"/>
    </location>
    <ligand>
        <name>Zn(2+)</name>
        <dbReference type="ChEBI" id="CHEBI:29105"/>
        <label>2</label>
    </ligand>
</feature>
<feature type="binding site" evidence="1">
    <location>
        <position position="169"/>
    </location>
    <ligand>
        <name>Zn(2+)</name>
        <dbReference type="ChEBI" id="CHEBI:29105"/>
        <label>1</label>
    </ligand>
</feature>
<feature type="binding site" evidence="1">
    <location>
        <position position="355"/>
    </location>
    <ligand>
        <name>Zn(2+)</name>
        <dbReference type="ChEBI" id="CHEBI:29105"/>
        <label>2</label>
    </ligand>
</feature>
<name>ARGE_ECO45</name>
<evidence type="ECO:0000255" key="1">
    <source>
        <dbReference type="HAMAP-Rule" id="MF_01108"/>
    </source>
</evidence>
<accession>B7MI93</accession>
<organism>
    <name type="scientific">Escherichia coli O45:K1 (strain S88 / ExPEC)</name>
    <dbReference type="NCBI Taxonomy" id="585035"/>
    <lineage>
        <taxon>Bacteria</taxon>
        <taxon>Pseudomonadati</taxon>
        <taxon>Pseudomonadota</taxon>
        <taxon>Gammaproteobacteria</taxon>
        <taxon>Enterobacterales</taxon>
        <taxon>Enterobacteriaceae</taxon>
        <taxon>Escherichia</taxon>
    </lineage>
</organism>
<proteinExistence type="inferred from homology"/>
<dbReference type="EC" id="3.5.1.16" evidence="1"/>
<dbReference type="EMBL" id="CU928161">
    <property type="protein sequence ID" value="CAR05591.1"/>
    <property type="molecule type" value="Genomic_DNA"/>
</dbReference>
<dbReference type="RefSeq" id="WP_001298411.1">
    <property type="nucleotide sequence ID" value="NC_011742.1"/>
</dbReference>
<dbReference type="SMR" id="B7MI93"/>
<dbReference type="MEROPS" id="M20.974"/>
<dbReference type="KEGG" id="ecz:ECS88_4412"/>
<dbReference type="HOGENOM" id="CLU_021802_2_4_6"/>
<dbReference type="UniPathway" id="UPA00068">
    <property type="reaction ID" value="UER00110"/>
</dbReference>
<dbReference type="Proteomes" id="UP000000747">
    <property type="component" value="Chromosome"/>
</dbReference>
<dbReference type="GO" id="GO:0005737">
    <property type="term" value="C:cytoplasm"/>
    <property type="evidence" value="ECO:0007669"/>
    <property type="project" value="UniProtKB-SubCell"/>
</dbReference>
<dbReference type="GO" id="GO:0008777">
    <property type="term" value="F:acetylornithine deacetylase activity"/>
    <property type="evidence" value="ECO:0007669"/>
    <property type="project" value="UniProtKB-UniRule"/>
</dbReference>
<dbReference type="GO" id="GO:0008270">
    <property type="term" value="F:zinc ion binding"/>
    <property type="evidence" value="ECO:0007669"/>
    <property type="project" value="UniProtKB-UniRule"/>
</dbReference>
<dbReference type="GO" id="GO:0006526">
    <property type="term" value="P:L-arginine biosynthetic process"/>
    <property type="evidence" value="ECO:0007669"/>
    <property type="project" value="UniProtKB-UniRule"/>
</dbReference>
<dbReference type="CDD" id="cd03894">
    <property type="entry name" value="M20_ArgE"/>
    <property type="match status" value="1"/>
</dbReference>
<dbReference type="FunFam" id="3.30.70.360:FF:000003">
    <property type="entry name" value="Acetylornithine deacetylase"/>
    <property type="match status" value="1"/>
</dbReference>
<dbReference type="Gene3D" id="3.30.70.360">
    <property type="match status" value="1"/>
</dbReference>
<dbReference type="Gene3D" id="3.40.630.10">
    <property type="entry name" value="Zn peptidases"/>
    <property type="match status" value="1"/>
</dbReference>
<dbReference type="HAMAP" id="MF_01108">
    <property type="entry name" value="ArgE"/>
    <property type="match status" value="1"/>
</dbReference>
<dbReference type="InterPro" id="IPR010169">
    <property type="entry name" value="AcOrn-deacetyl"/>
</dbReference>
<dbReference type="InterPro" id="IPR001261">
    <property type="entry name" value="ArgE/DapE_CS"/>
</dbReference>
<dbReference type="InterPro" id="IPR036264">
    <property type="entry name" value="Bact_exopeptidase_dim_dom"/>
</dbReference>
<dbReference type="InterPro" id="IPR002933">
    <property type="entry name" value="Peptidase_M20"/>
</dbReference>
<dbReference type="InterPro" id="IPR011650">
    <property type="entry name" value="Peptidase_M20_dimer"/>
</dbReference>
<dbReference type="InterPro" id="IPR050072">
    <property type="entry name" value="Peptidase_M20A"/>
</dbReference>
<dbReference type="NCBIfam" id="TIGR01892">
    <property type="entry name" value="AcOrn-deacetyl"/>
    <property type="match status" value="1"/>
</dbReference>
<dbReference type="NCBIfam" id="NF003474">
    <property type="entry name" value="PRK05111.1"/>
    <property type="match status" value="1"/>
</dbReference>
<dbReference type="PANTHER" id="PTHR43808">
    <property type="entry name" value="ACETYLORNITHINE DEACETYLASE"/>
    <property type="match status" value="1"/>
</dbReference>
<dbReference type="PANTHER" id="PTHR43808:SF1">
    <property type="entry name" value="ACETYLORNITHINE DEACETYLASE"/>
    <property type="match status" value="1"/>
</dbReference>
<dbReference type="Pfam" id="PF07687">
    <property type="entry name" value="M20_dimer"/>
    <property type="match status" value="1"/>
</dbReference>
<dbReference type="Pfam" id="PF01546">
    <property type="entry name" value="Peptidase_M20"/>
    <property type="match status" value="1"/>
</dbReference>
<dbReference type="SUPFAM" id="SSF55031">
    <property type="entry name" value="Bacterial exopeptidase dimerisation domain"/>
    <property type="match status" value="1"/>
</dbReference>
<dbReference type="SUPFAM" id="SSF53187">
    <property type="entry name" value="Zn-dependent exopeptidases"/>
    <property type="match status" value="1"/>
</dbReference>
<dbReference type="PROSITE" id="PS00758">
    <property type="entry name" value="ARGE_DAPE_CPG2_1"/>
    <property type="match status" value="1"/>
</dbReference>
<dbReference type="PROSITE" id="PS00759">
    <property type="entry name" value="ARGE_DAPE_CPG2_2"/>
    <property type="match status" value="1"/>
</dbReference>
<protein>
    <recommendedName>
        <fullName evidence="1">Acetylornithine deacetylase</fullName>
        <shortName evidence="1">AO</shortName>
        <shortName evidence="1">Acetylornithinase</shortName>
        <ecNumber evidence="1">3.5.1.16</ecNumber>
    </recommendedName>
    <alternativeName>
        <fullName evidence="1">N-acetylornithinase</fullName>
        <shortName evidence="1">NAO</shortName>
    </alternativeName>
</protein>